<sequence length="714" mass="80546">MKRSEKSSTSVVSNNKQQDVNIISSNEVGVKEENKGHQEFLLKVLILSVIYVLAFSTRLFSVLRYESVIHEFDPYFNYRSTIYLVQEGFYNFLNWFDERAWYPLGRIVGGTIYPGLMATASLVHWSLNSLNITVNIRNVCVLLSPWFASNTAMVTYKFAKEVKDTQTGLVAAAMIAIVPGYISRSVAGSFDNEGIAIFALIFTYYCWIKSVNTGSLMWAAICSLAYFYMASAWGGYVFIINLIPLHAFFLLLTGRYSHRLYIAYSTMFVIGTILSMQITFISFQPVQSSEHLAAIGIFGLLQLYAGLSWVKSHLTNEAFKKLQRLTVLFVLSCAAAVLVVGTLTGYISPFNGRFYSLLDPTYARDHIPIIASVSEHQPTTWASYFFDLHILVFLFPAGLYFCFQKLTDANIFLILYGVTSIYFSGVMVRLMLVLAPVACILAAVAVSATLTTYMKKLKAPSSPSDANNSKESGGVMVAVLTVLLILYAFHCTWVTSEAYSSPSIVLSAKQNDGSRVIFDDFREAYRWIGQNTADDARIMSWWDYGYQLSAMANRTVLVDNNTWNNSHIAQVGKAFASTEEDAYIQMKALDVDYVLVIFGGLTGYSSDDINKFLWMVRIGGSCDPNIKEQDYLTNGQYRIDKGASPTMLNSLMYKLSYYRFSEVHTDYQRPTGFDRVRNVEIGNKNFDLTYLEEAFTSVHWLVRVYKVKDFDNRA</sequence>
<keyword id="KW-0256">Endoplasmic reticulum</keyword>
<keyword id="KW-0325">Glycoprotein</keyword>
<keyword id="KW-0328">Glycosyltransferase</keyword>
<keyword id="KW-0460">Magnesium</keyword>
<keyword id="KW-0464">Manganese</keyword>
<keyword id="KW-0472">Membrane</keyword>
<keyword id="KW-0479">Metal-binding</keyword>
<keyword id="KW-1185">Reference proteome</keyword>
<keyword id="KW-0808">Transferase</keyword>
<keyword id="KW-0812">Transmembrane</keyword>
<keyword id="KW-1133">Transmembrane helix</keyword>
<accession>Q54NM9</accession>
<dbReference type="EC" id="2.4.99.18"/>
<dbReference type="EMBL" id="AAFI02000074">
    <property type="protein sequence ID" value="EAL64892.1"/>
    <property type="molecule type" value="Genomic_DNA"/>
</dbReference>
<dbReference type="RefSeq" id="XP_639887.1">
    <property type="nucleotide sequence ID" value="XM_634795.1"/>
</dbReference>
<dbReference type="SMR" id="Q54NM9"/>
<dbReference type="FunCoup" id="Q54NM9">
    <property type="interactions" value="991"/>
</dbReference>
<dbReference type="STRING" id="44689.Q54NM9"/>
<dbReference type="GlyCosmos" id="Q54NM9">
    <property type="glycosylation" value="3 sites, No reported glycans"/>
</dbReference>
<dbReference type="GlyGen" id="Q54NM9">
    <property type="glycosylation" value="3 sites"/>
</dbReference>
<dbReference type="PaxDb" id="44689-DDB0230191"/>
<dbReference type="EnsemblProtists" id="EAL64892">
    <property type="protein sequence ID" value="EAL64892"/>
    <property type="gene ID" value="DDB_G0285159"/>
</dbReference>
<dbReference type="GeneID" id="8624958"/>
<dbReference type="KEGG" id="ddi:DDB_G0285159"/>
<dbReference type="dictyBase" id="DDB_G0285159">
    <property type="gene designation" value="stt3"/>
</dbReference>
<dbReference type="VEuPathDB" id="AmoebaDB:DDB_G0285159"/>
<dbReference type="eggNOG" id="KOG2292">
    <property type="taxonomic scope" value="Eukaryota"/>
</dbReference>
<dbReference type="HOGENOM" id="CLU_009279_1_0_1"/>
<dbReference type="InParanoid" id="Q54NM9"/>
<dbReference type="OMA" id="TWYAIGT"/>
<dbReference type="PhylomeDB" id="Q54NM9"/>
<dbReference type="UniPathway" id="UPA00378"/>
<dbReference type="PRO" id="PR:Q54NM9"/>
<dbReference type="Proteomes" id="UP000002195">
    <property type="component" value="Chromosome 4"/>
</dbReference>
<dbReference type="GO" id="GO:0008250">
    <property type="term" value="C:oligosaccharyltransferase complex"/>
    <property type="evidence" value="ECO:0000250"/>
    <property type="project" value="dictyBase"/>
</dbReference>
<dbReference type="GO" id="GO:0004579">
    <property type="term" value="F:dolichyl-diphosphooligosaccharide-protein glycotransferase activity"/>
    <property type="evidence" value="ECO:0007669"/>
    <property type="project" value="UniProtKB-EC"/>
</dbReference>
<dbReference type="GO" id="GO:0046872">
    <property type="term" value="F:metal ion binding"/>
    <property type="evidence" value="ECO:0007669"/>
    <property type="project" value="UniProtKB-KW"/>
</dbReference>
<dbReference type="GO" id="GO:0006487">
    <property type="term" value="P:protein N-linked glycosylation"/>
    <property type="evidence" value="ECO:0000250"/>
    <property type="project" value="dictyBase"/>
</dbReference>
<dbReference type="FunFam" id="3.40.50.12610:FF:000002">
    <property type="entry name" value="dolichyl-diphosphooligosaccharide--protein glycosyltransferase subunit STT3A"/>
    <property type="match status" value="1"/>
</dbReference>
<dbReference type="Gene3D" id="3.40.50.12610">
    <property type="match status" value="1"/>
</dbReference>
<dbReference type="InterPro" id="IPR003674">
    <property type="entry name" value="Oligo_trans_STT3"/>
</dbReference>
<dbReference type="InterPro" id="IPR048999">
    <property type="entry name" value="STT3-PglB_core"/>
</dbReference>
<dbReference type="InterPro" id="IPR048307">
    <property type="entry name" value="STT3_N"/>
</dbReference>
<dbReference type="PANTHER" id="PTHR13872">
    <property type="entry name" value="DOLICHYL-DIPHOSPHOOLIGOSACCHARIDE--PROTEIN GLYCOSYLTRANSFERASE SUBUNIT"/>
    <property type="match status" value="1"/>
</dbReference>
<dbReference type="PANTHER" id="PTHR13872:SF1">
    <property type="entry name" value="DOLICHYL-DIPHOSPHOOLIGOSACCHARIDE--PROTEIN GLYCOSYLTRANSFERASE SUBUNIT STT3B"/>
    <property type="match status" value="1"/>
</dbReference>
<dbReference type="Pfam" id="PF02516">
    <property type="entry name" value="STT3"/>
    <property type="match status" value="1"/>
</dbReference>
<dbReference type="Pfam" id="PF21436">
    <property type="entry name" value="STT3-PglB_core"/>
    <property type="match status" value="1"/>
</dbReference>
<gene>
    <name type="primary">stt3</name>
    <name type="ORF">DDB_G0285159</name>
</gene>
<reference key="1">
    <citation type="journal article" date="2005" name="Nature">
        <title>The genome of the social amoeba Dictyostelium discoideum.</title>
        <authorList>
            <person name="Eichinger L."/>
            <person name="Pachebat J.A."/>
            <person name="Gloeckner G."/>
            <person name="Rajandream M.A."/>
            <person name="Sucgang R."/>
            <person name="Berriman M."/>
            <person name="Song J."/>
            <person name="Olsen R."/>
            <person name="Szafranski K."/>
            <person name="Xu Q."/>
            <person name="Tunggal B."/>
            <person name="Kummerfeld S."/>
            <person name="Madera M."/>
            <person name="Konfortov B.A."/>
            <person name="Rivero F."/>
            <person name="Bankier A.T."/>
            <person name="Lehmann R."/>
            <person name="Hamlin N."/>
            <person name="Davies R."/>
            <person name="Gaudet P."/>
            <person name="Fey P."/>
            <person name="Pilcher K."/>
            <person name="Chen G."/>
            <person name="Saunders D."/>
            <person name="Sodergren E.J."/>
            <person name="Davis P."/>
            <person name="Kerhornou A."/>
            <person name="Nie X."/>
            <person name="Hall N."/>
            <person name="Anjard C."/>
            <person name="Hemphill L."/>
            <person name="Bason N."/>
            <person name="Farbrother P."/>
            <person name="Desany B."/>
            <person name="Just E."/>
            <person name="Morio T."/>
            <person name="Rost R."/>
            <person name="Churcher C.M."/>
            <person name="Cooper J."/>
            <person name="Haydock S."/>
            <person name="van Driessche N."/>
            <person name="Cronin A."/>
            <person name="Goodhead I."/>
            <person name="Muzny D.M."/>
            <person name="Mourier T."/>
            <person name="Pain A."/>
            <person name="Lu M."/>
            <person name="Harper D."/>
            <person name="Lindsay R."/>
            <person name="Hauser H."/>
            <person name="James K.D."/>
            <person name="Quiles M."/>
            <person name="Madan Babu M."/>
            <person name="Saito T."/>
            <person name="Buchrieser C."/>
            <person name="Wardroper A."/>
            <person name="Felder M."/>
            <person name="Thangavelu M."/>
            <person name="Johnson D."/>
            <person name="Knights A."/>
            <person name="Loulseged H."/>
            <person name="Mungall K.L."/>
            <person name="Oliver K."/>
            <person name="Price C."/>
            <person name="Quail M.A."/>
            <person name="Urushihara H."/>
            <person name="Hernandez J."/>
            <person name="Rabbinowitsch E."/>
            <person name="Steffen D."/>
            <person name="Sanders M."/>
            <person name="Ma J."/>
            <person name="Kohara Y."/>
            <person name="Sharp S."/>
            <person name="Simmonds M.N."/>
            <person name="Spiegler S."/>
            <person name="Tivey A."/>
            <person name="Sugano S."/>
            <person name="White B."/>
            <person name="Walker D."/>
            <person name="Woodward J.R."/>
            <person name="Winckler T."/>
            <person name="Tanaka Y."/>
            <person name="Shaulsky G."/>
            <person name="Schleicher M."/>
            <person name="Weinstock G.M."/>
            <person name="Rosenthal A."/>
            <person name="Cox E.C."/>
            <person name="Chisholm R.L."/>
            <person name="Gibbs R.A."/>
            <person name="Loomis W.F."/>
            <person name="Platzer M."/>
            <person name="Kay R.R."/>
            <person name="Williams J.G."/>
            <person name="Dear P.H."/>
            <person name="Noegel A.A."/>
            <person name="Barrell B.G."/>
            <person name="Kuspa A."/>
        </authorList>
    </citation>
    <scope>NUCLEOTIDE SEQUENCE [LARGE SCALE GENOMIC DNA]</scope>
    <source>
        <strain>AX4</strain>
    </source>
</reference>
<organism>
    <name type="scientific">Dictyostelium discoideum</name>
    <name type="common">Social amoeba</name>
    <dbReference type="NCBI Taxonomy" id="44689"/>
    <lineage>
        <taxon>Eukaryota</taxon>
        <taxon>Amoebozoa</taxon>
        <taxon>Evosea</taxon>
        <taxon>Eumycetozoa</taxon>
        <taxon>Dictyostelia</taxon>
        <taxon>Dictyosteliales</taxon>
        <taxon>Dictyosteliaceae</taxon>
        <taxon>Dictyostelium</taxon>
    </lineage>
</organism>
<evidence type="ECO:0000250" key="1"/>
<evidence type="ECO:0000250" key="2">
    <source>
        <dbReference type="UniProtKB" id="B9KDD4"/>
    </source>
</evidence>
<evidence type="ECO:0000250" key="3">
    <source>
        <dbReference type="UniProtKB" id="P39007"/>
    </source>
</evidence>
<evidence type="ECO:0000250" key="4">
    <source>
        <dbReference type="UniProtKB" id="P46978"/>
    </source>
</evidence>
<evidence type="ECO:0000250" key="5">
    <source>
        <dbReference type="UniProtKB" id="Q5HTX9"/>
    </source>
</evidence>
<evidence type="ECO:0000255" key="6"/>
<evidence type="ECO:0000255" key="7">
    <source>
        <dbReference type="PROSITE-ProRule" id="PRU00498"/>
    </source>
</evidence>
<evidence type="ECO:0000305" key="8"/>
<feature type="chain" id="PRO_0000328633" description="Dolichyl-diphosphooligosaccharide--protein glycosyltransferase subunit STT3">
    <location>
        <begin position="1"/>
        <end position="714"/>
    </location>
</feature>
<feature type="topological domain" description="Cytoplasmic" evidence="8">
    <location>
        <begin position="1"/>
        <end position="39"/>
    </location>
</feature>
<feature type="transmembrane region" description="Helical" evidence="6">
    <location>
        <begin position="40"/>
        <end position="60"/>
    </location>
</feature>
<feature type="topological domain" description="Lumenal" evidence="8">
    <location>
        <begin position="61"/>
        <end position="143"/>
    </location>
</feature>
<feature type="transmembrane region" description="Helical" evidence="3">
    <location>
        <begin position="144"/>
        <end position="162"/>
    </location>
</feature>
<feature type="topological domain" description="Cytoplasmic" evidence="8">
    <location>
        <begin position="163"/>
        <end position="164"/>
    </location>
</feature>
<feature type="transmembrane region" description="Helical" evidence="3">
    <location>
        <begin position="165"/>
        <end position="182"/>
    </location>
</feature>
<feature type="topological domain" description="Lumenal" evidence="8">
    <location>
        <begin position="183"/>
        <end position="193"/>
    </location>
</feature>
<feature type="transmembrane region" description="Helical" evidence="3">
    <location>
        <begin position="194"/>
        <end position="213"/>
    </location>
</feature>
<feature type="topological domain" description="Cytoplasmic" evidence="8">
    <location>
        <begin position="214"/>
        <end position="215"/>
    </location>
</feature>
<feature type="transmembrane region" description="Helical" evidence="3">
    <location>
        <begin position="216"/>
        <end position="230"/>
    </location>
</feature>
<feature type="topological domain" description="Lumenal" evidence="8">
    <location>
        <begin position="231"/>
        <end position="235"/>
    </location>
</feature>
<feature type="transmembrane region" description="Helical" evidence="3">
    <location>
        <begin position="236"/>
        <end position="252"/>
    </location>
</feature>
<feature type="topological domain" description="Cytoplasmic" evidence="8">
    <location>
        <begin position="253"/>
        <end position="257"/>
    </location>
</feature>
<feature type="transmembrane region" description="Helical" evidence="3">
    <location>
        <begin position="258"/>
        <end position="283"/>
    </location>
</feature>
<feature type="topological domain" description="Lumenal" evidence="8">
    <location>
        <begin position="284"/>
        <end position="291"/>
    </location>
</feature>
<feature type="transmembrane region" description="Helical" evidence="3">
    <location>
        <begin position="292"/>
        <end position="311"/>
    </location>
</feature>
<feature type="topological domain" description="Cytoplasmic" evidence="8">
    <location>
        <begin position="312"/>
        <end position="326"/>
    </location>
</feature>
<feature type="transmembrane region" description="Helical" evidence="6">
    <location>
        <begin position="327"/>
        <end position="347"/>
    </location>
</feature>
<feature type="topological domain" description="Lumenal" evidence="8">
    <location>
        <begin position="348"/>
        <end position="380"/>
    </location>
</feature>
<feature type="transmembrane region" description="Helical" evidence="3">
    <location>
        <begin position="381"/>
        <end position="403"/>
    </location>
</feature>
<feature type="topological domain" description="Cytoplasmic" evidence="8">
    <location>
        <begin position="404"/>
        <end position="409"/>
    </location>
</feature>
<feature type="transmembrane region" description="Helical" evidence="3">
    <location>
        <begin position="410"/>
        <end position="426"/>
    </location>
</feature>
<feature type="topological domain" description="Lumenal" evidence="8">
    <location>
        <begin position="427"/>
        <end position="430"/>
    </location>
</feature>
<feature type="transmembrane region" description="Helical" evidence="3">
    <location>
        <begin position="431"/>
        <end position="452"/>
    </location>
</feature>
<feature type="topological domain" description="Cytoplasmic" evidence="8">
    <location>
        <begin position="453"/>
        <end position="466"/>
    </location>
</feature>
<feature type="transmembrane region" description="Helical" evidence="3">
    <location>
        <begin position="467"/>
        <end position="489"/>
    </location>
</feature>
<feature type="topological domain" description="Lumenal" evidence="8">
    <location>
        <begin position="490"/>
        <end position="714"/>
    </location>
</feature>
<feature type="region of interest" description="Interacts with target acceptor peptide in protein substrate" evidence="2">
    <location>
        <begin position="541"/>
        <end position="543"/>
    </location>
</feature>
<feature type="short sequence motif" description="DXD motif 1" evidence="5">
    <location>
        <begin position="71"/>
        <end position="73"/>
    </location>
</feature>
<feature type="short sequence motif" description="DXD motif 2" evidence="3">
    <location>
        <begin position="191"/>
        <end position="193"/>
    </location>
</feature>
<feature type="short sequence motif" description="SVSE motif" evidence="5">
    <location>
        <begin position="372"/>
        <end position="375"/>
    </location>
</feature>
<feature type="short sequence motif" description="WWDYG motif" evidence="3">
    <location>
        <begin position="541"/>
        <end position="545"/>
    </location>
</feature>
<feature type="short sequence motif" description="DK motif" evidence="3">
    <location>
        <begin position="608"/>
        <end position="615"/>
    </location>
</feature>
<feature type="binding site" evidence="2">
    <location>
        <position position="73"/>
    </location>
    <ligand>
        <name>Mn(2+)</name>
        <dbReference type="ChEBI" id="CHEBI:29035"/>
    </ligand>
</feature>
<feature type="binding site" evidence="2">
    <location>
        <position position="191"/>
    </location>
    <ligand>
        <name>Mn(2+)</name>
        <dbReference type="ChEBI" id="CHEBI:29035"/>
    </ligand>
</feature>
<feature type="binding site" evidence="2">
    <location>
        <position position="193"/>
    </location>
    <ligand>
        <name>Mn(2+)</name>
        <dbReference type="ChEBI" id="CHEBI:29035"/>
    </ligand>
</feature>
<feature type="binding site" evidence="2">
    <location>
        <position position="429"/>
    </location>
    <ligand>
        <name>dolichyl diphosphooligosaccharide</name>
        <dbReference type="ChEBI" id="CHEBI:57570"/>
    </ligand>
</feature>
<feature type="binding site" evidence="2">
    <location>
        <position position="546"/>
    </location>
    <ligand>
        <name>dolichyl diphosphooligosaccharide</name>
        <dbReference type="ChEBI" id="CHEBI:57570"/>
    </ligand>
</feature>
<feature type="site" description="Interacts with target acceptor peptide in protein substrate" evidence="2">
    <location>
        <position position="73"/>
    </location>
</feature>
<feature type="site" description="Important for catalytic activity" evidence="2">
    <location>
        <position position="184"/>
    </location>
</feature>
<feature type="site" description="Interacts with target acceptor peptide in protein substrate" evidence="2">
    <location>
        <position position="375"/>
    </location>
</feature>
<feature type="site" description="Interacts with target acceptor peptide in protein substrate" evidence="2">
    <location>
        <position position="611"/>
    </location>
</feature>
<feature type="glycosylation site" description="N-linked (GlcNAc...) asparagine" evidence="7">
    <location>
        <position position="553"/>
    </location>
</feature>
<feature type="glycosylation site" description="N-linked (GlcNAc...) asparagine" evidence="7">
    <location>
        <position position="560"/>
    </location>
</feature>
<feature type="glycosylation site" description="N-linked (GlcNAc...) (high mannose) asparagine" evidence="3">
    <location>
        <position position="564"/>
    </location>
</feature>
<protein>
    <recommendedName>
        <fullName>Dolichyl-diphosphooligosaccharide--protein glycosyltransferase subunit STT3</fullName>
        <shortName>Oligosaccharyl transferase subunit STT3</shortName>
        <ecNumber>2.4.99.18</ecNumber>
    </recommendedName>
</protein>
<comment type="function">
    <text evidence="3">Catalytic subunit of the oligosaccharyl transferase (OST) complex that catalyzes the initial transfer of a defined glycan (Glc(3)Man(9)GlcNAc(2) in eukaryotes) from the lipid carrier dolichol-pyrophosphate to an asparagine residue within an Asn-X-Ser/Thr consensus motif in nascent polypeptide chains, the first step in protein N-glycosylation. N-glycosylation occurs cotranslationally and the complex associates with the Sec61 complex at the channel-forming translocon complex that mediates protein translocation across the endoplasmic reticulum (ER). All subunits are required for a maximal enzyme activity. This subunit contains the active site and the acceptor peptide and donor lipid-linked oligosaccharide (LLO) binding pockets.</text>
</comment>
<comment type="catalytic activity">
    <reaction evidence="3">
        <text>a di-trans,poly-cis-dolichyl diphosphooligosaccharide + L-asparaginyl-[protein] = N(4)-(oligosaccharide-(1-&gt;4)-N-acetyl-beta-D-glucosaminyl-(1-&gt;4)-N-acetyl-beta-D-glucosaminyl)-L-asparaginyl-[protein] + a di-trans,poly-cis-dolichyl diphosphate + H(+)</text>
        <dbReference type="Rhea" id="RHEA:22980"/>
        <dbReference type="Rhea" id="RHEA-COMP:12804"/>
        <dbReference type="Rhea" id="RHEA-COMP:12805"/>
        <dbReference type="Rhea" id="RHEA-COMP:19506"/>
        <dbReference type="Rhea" id="RHEA-COMP:19509"/>
        <dbReference type="ChEBI" id="CHEBI:15378"/>
        <dbReference type="ChEBI" id="CHEBI:50347"/>
        <dbReference type="ChEBI" id="CHEBI:57497"/>
        <dbReference type="ChEBI" id="CHEBI:57570"/>
        <dbReference type="ChEBI" id="CHEBI:132529"/>
        <dbReference type="EC" id="2.4.99.18"/>
    </reaction>
</comment>
<comment type="cofactor">
    <cofactor evidence="2">
        <name>Mg(2+)</name>
        <dbReference type="ChEBI" id="CHEBI:18420"/>
    </cofactor>
    <cofactor evidence="2">
        <name>Mn(2+)</name>
        <dbReference type="ChEBI" id="CHEBI:29035"/>
    </cofactor>
</comment>
<comment type="pathway">
    <text evidence="3">Protein modification; protein glycosylation.</text>
</comment>
<comment type="subunit">
    <text evidence="1">Component of the oligosaccharyltransferase (OST) complex.</text>
</comment>
<comment type="subcellular location">
    <subcellularLocation>
        <location evidence="4">Endoplasmic reticulum membrane</location>
        <topology evidence="3">Multi-pass membrane protein</topology>
    </subcellularLocation>
</comment>
<comment type="domain">
    <text evidence="3">Despite low primary sequence conservation between eukaryotic catalytic subunits and bacterial and archaeal single subunit OSTs (ssOST), structural comparison revealed several common motifs at spatially equivalent positions, like the DXD motif 1 on the external loop 1 and the DXD motif 2 on the external loop 2 involved in binding of the metal ion cofactor and the carboxamide group of the acceptor asparagine, the conserved Glu residue of the TIXE/SVSE motif on the external loop 5 involved in catalysis, as well as the WWDYG and the DK/MI motifs in the globular domain that define the binding pocket for the +2 Ser/Thr of the acceptor sequon. In bacterial ssOSTs, an Arg residue was found to interact with a negatively charged side chain at the -2 position of the sequon. This Arg is conserved in bacterial enzymes and correlates with an extended sequon requirement (Asp-X-Asn-X-Ser/Thr) for bacterial N-glycosylation.</text>
</comment>
<comment type="similarity">
    <text evidence="8">Belongs to the STT3 family.</text>
</comment>
<proteinExistence type="inferred from homology"/>
<name>STT3_DICDI</name>